<organism>
    <name type="scientific">Pongo abelii</name>
    <name type="common">Sumatran orangutan</name>
    <name type="synonym">Pongo pygmaeus abelii</name>
    <dbReference type="NCBI Taxonomy" id="9601"/>
    <lineage>
        <taxon>Eukaryota</taxon>
        <taxon>Metazoa</taxon>
        <taxon>Chordata</taxon>
        <taxon>Craniata</taxon>
        <taxon>Vertebrata</taxon>
        <taxon>Euteleostomi</taxon>
        <taxon>Mammalia</taxon>
        <taxon>Eutheria</taxon>
        <taxon>Euarchontoglires</taxon>
        <taxon>Primates</taxon>
        <taxon>Haplorrhini</taxon>
        <taxon>Catarrhini</taxon>
        <taxon>Hominidae</taxon>
        <taxon>Pongo</taxon>
    </lineage>
</organism>
<dbReference type="EMBL" id="CR860835">
    <property type="protein sequence ID" value="CAH92944.1"/>
    <property type="molecule type" value="mRNA"/>
</dbReference>
<dbReference type="RefSeq" id="NP_001126734.1">
    <property type="nucleotide sequence ID" value="NM_001133262.1"/>
</dbReference>
<dbReference type="BMRB" id="Q5R5M2"/>
<dbReference type="SMR" id="Q5R5M2"/>
<dbReference type="FunCoup" id="Q5R5M2">
    <property type="interactions" value="3987"/>
</dbReference>
<dbReference type="STRING" id="9601.ENSPPYP00000008496"/>
<dbReference type="GeneID" id="100173736"/>
<dbReference type="KEGG" id="pon:100173736"/>
<dbReference type="CTD" id="164"/>
<dbReference type="eggNOG" id="KOG1062">
    <property type="taxonomic scope" value="Eukaryota"/>
</dbReference>
<dbReference type="InParanoid" id="Q5R5M2"/>
<dbReference type="OrthoDB" id="28053at2759"/>
<dbReference type="Proteomes" id="UP000001595">
    <property type="component" value="Unplaced"/>
</dbReference>
<dbReference type="GO" id="GO:0030121">
    <property type="term" value="C:AP-1 adaptor complex"/>
    <property type="evidence" value="ECO:0007669"/>
    <property type="project" value="InterPro"/>
</dbReference>
<dbReference type="GO" id="GO:0005905">
    <property type="term" value="C:clathrin-coated pit"/>
    <property type="evidence" value="ECO:0007669"/>
    <property type="project" value="UniProtKB-SubCell"/>
</dbReference>
<dbReference type="GO" id="GO:0048471">
    <property type="term" value="C:perinuclear region of cytoplasm"/>
    <property type="evidence" value="ECO:0007669"/>
    <property type="project" value="UniProtKB-SubCell"/>
</dbReference>
<dbReference type="GO" id="GO:0006886">
    <property type="term" value="P:intracellular protein transport"/>
    <property type="evidence" value="ECO:0007669"/>
    <property type="project" value="InterPro"/>
</dbReference>
<dbReference type="GO" id="GO:0016192">
    <property type="term" value="P:vesicle-mediated transport"/>
    <property type="evidence" value="ECO:0007669"/>
    <property type="project" value="InterPro"/>
</dbReference>
<dbReference type="FunFam" id="1.25.10.10:FF:000030">
    <property type="entry name" value="AP-1 complex subunit gamma"/>
    <property type="match status" value="1"/>
</dbReference>
<dbReference type="FunFam" id="2.60.40.1230:FF:000002">
    <property type="entry name" value="AP-1 complex subunit gamma"/>
    <property type="match status" value="1"/>
</dbReference>
<dbReference type="Gene3D" id="2.60.40.1230">
    <property type="match status" value="1"/>
</dbReference>
<dbReference type="Gene3D" id="1.25.10.10">
    <property type="entry name" value="Leucine-rich Repeat Variant"/>
    <property type="match status" value="1"/>
</dbReference>
<dbReference type="InterPro" id="IPR050840">
    <property type="entry name" value="Adaptor_Complx_Large_Subunit"/>
</dbReference>
<dbReference type="InterPro" id="IPR017107">
    <property type="entry name" value="AP1_complex_gsu"/>
</dbReference>
<dbReference type="InterPro" id="IPR011989">
    <property type="entry name" value="ARM-like"/>
</dbReference>
<dbReference type="InterPro" id="IPR016024">
    <property type="entry name" value="ARM-type_fold"/>
</dbReference>
<dbReference type="InterPro" id="IPR002553">
    <property type="entry name" value="Clathrin/coatomer_adapt-like_N"/>
</dbReference>
<dbReference type="InterPro" id="IPR008152">
    <property type="entry name" value="Clathrin_a/b/g-adaptin_app_Ig"/>
</dbReference>
<dbReference type="InterPro" id="IPR013041">
    <property type="entry name" value="Clathrin_app_Ig-like_sf"/>
</dbReference>
<dbReference type="InterPro" id="IPR008153">
    <property type="entry name" value="GAE_dom"/>
</dbReference>
<dbReference type="PANTHER" id="PTHR22780">
    <property type="entry name" value="ADAPTIN, ALPHA/GAMMA/EPSILON"/>
    <property type="match status" value="1"/>
</dbReference>
<dbReference type="Pfam" id="PF01602">
    <property type="entry name" value="Adaptin_N"/>
    <property type="match status" value="1"/>
</dbReference>
<dbReference type="Pfam" id="PF02883">
    <property type="entry name" value="Alpha_adaptinC2"/>
    <property type="match status" value="1"/>
</dbReference>
<dbReference type="PIRSF" id="PIRSF037094">
    <property type="entry name" value="AP1_complex_gamma"/>
    <property type="match status" value="1"/>
</dbReference>
<dbReference type="SMART" id="SM00809">
    <property type="entry name" value="Alpha_adaptinC2"/>
    <property type="match status" value="1"/>
</dbReference>
<dbReference type="SUPFAM" id="SSF48371">
    <property type="entry name" value="ARM repeat"/>
    <property type="match status" value="1"/>
</dbReference>
<dbReference type="SUPFAM" id="SSF49348">
    <property type="entry name" value="Clathrin adaptor appendage domain"/>
    <property type="match status" value="1"/>
</dbReference>
<dbReference type="PROSITE" id="PS50180">
    <property type="entry name" value="GAE"/>
    <property type="match status" value="1"/>
</dbReference>
<proteinExistence type="evidence at transcript level"/>
<evidence type="ECO:0000250" key="1">
    <source>
        <dbReference type="UniProtKB" id="O43747"/>
    </source>
</evidence>
<evidence type="ECO:0000250" key="2">
    <source>
        <dbReference type="UniProtKB" id="P22892"/>
    </source>
</evidence>
<evidence type="ECO:0000255" key="3">
    <source>
        <dbReference type="PROSITE-ProRule" id="PRU00093"/>
    </source>
</evidence>
<evidence type="ECO:0000256" key="4">
    <source>
        <dbReference type="SAM" id="MobiDB-lite"/>
    </source>
</evidence>
<evidence type="ECO:0000305" key="5"/>
<comment type="function">
    <text evidence="1">Subunit of clathrin-associated adaptor protein complex 1 that plays a role in protein sorting in the late-Golgi/trans-Golgi network (TGN) and/or endosomes. The AP complexes mediate both the recruitment of clathrin to membranes and the recognition of sorting signals within the cytosolic tails of transmembrane cargo molecules. In association with AFTPH/aftiphilin in the aftiphilin/p200/gamma-synergin complex, involved in the trafficking of transferrin from early to recycling endosomes, and the membrane trafficking of furin and the lysosomal enzyme cathepsin D between the trans-Golgi network (TGN) and endosomes (By similarity).</text>
</comment>
<comment type="subunit">
    <text evidence="1 2">Adaptor protein complex 1 (AP-1) is a heterotetramer composed of two large adaptins (gamma-type subunit AP1G1 and beta-type subunit AP1B1), a medium adaptin (mu-type subunit AP1M1 or AP1M2) and a small adaptin (sigma-type subunit AP1S1 or AP1S2 or AP1S3) (By similarity). Interacts (via GAE domain) with RABEP1 (By similarity). Interacts with EPS15 (By similarity). Interacts with SYNRG/gamma-synergin (By similarity). Interacts (via GAE domain) with AP1AR (via coiled-coil domain) (By similarity). Interacts with CLN3 (via dileucine motif); this interaction facilitates lysosomal targeting (By similarity). Interacts (via GAE domain) with AFTPH/aftiphilin; the interaction is required to recruit AFTPH/aftiphilin to the perinuclear region of the cell (By similarity).</text>
</comment>
<comment type="subcellular location">
    <subcellularLocation>
        <location evidence="1">Golgi apparatus</location>
    </subcellularLocation>
    <subcellularLocation>
        <location evidence="1">Cytoplasmic vesicle</location>
        <location evidence="1">Clathrin-coated vesicle membrane</location>
        <topology evidence="1">Peripheral membrane protein</topology>
        <orientation evidence="1">Cytoplasmic side</orientation>
    </subcellularLocation>
    <subcellularLocation>
        <location evidence="1">Cytoplasm</location>
    </subcellularLocation>
    <subcellularLocation>
        <location evidence="1">Cytoplasm</location>
        <location evidence="1">Perinuclear region</location>
    </subcellularLocation>
    <subcellularLocation>
        <location evidence="1">Cytoplasmic vesicle</location>
        <location evidence="1">Clathrin-coated vesicle</location>
    </subcellularLocation>
    <subcellularLocation>
        <location evidence="1">Membrane</location>
        <location evidence="1">Clathrin-coated pit</location>
    </subcellularLocation>
    <text evidence="1">Component of the coat surrounding the cytoplasmic face of coated vesicles located at the Golgi complex (By similarity). Co-localizes with AFTPH/aftiphilin in the cytoplasm (By similarity).</text>
</comment>
<comment type="similarity">
    <text evidence="5">Belongs to the adaptor complexes large subunit family.</text>
</comment>
<protein>
    <recommendedName>
        <fullName>AP-1 complex subunit gamma-1</fullName>
    </recommendedName>
    <alternativeName>
        <fullName>Adaptor protein complex AP-1 subunit gamma-1</fullName>
    </alternativeName>
    <alternativeName>
        <fullName>Adaptor-related protein complex 1 subunit gamma-1</fullName>
    </alternativeName>
    <alternativeName>
        <fullName>Clathrin assembly protein complex 1 gamma-1 large chain</fullName>
    </alternativeName>
    <alternativeName>
        <fullName>Gamma-adaptin</fullName>
    </alternativeName>
    <alternativeName>
        <fullName>Gamma1-adaptin</fullName>
    </alternativeName>
    <alternativeName>
        <fullName>Golgi adaptor HA1/AP1 adaptin subunit gamma-1</fullName>
    </alternativeName>
</protein>
<sequence length="822" mass="91321">MPAPIRLRELIRTIRTARTQAEEREMIQKECAAIRSSFREEDNTYRCRNVAKLLYMHMLGYPAHFGQLECLKLIASQKFTDKRIGYLGAMLLLDERQDVHLLMTNCIKNDLNHSTQFVQGLALCTLGCMGSSEMCRDLAGEVEKLLKTSNSYLRKKAALCAVHVIRKVPELMEMFLPATKNLLNEKNHGVLHTSVVLLTEMCERSPDMPAHFRKLVPQLVRILKNLIMSGYSPEHDVSGISDPFLQVRILRLLRILGRNDDDSSEAMNDILAQVATNTETSKNVGNAILYETVLTIMDIKSESGLRVLAINILGRFLLNNDKNIRYVALTSLLKTVRTDHNTVQRHRSTIVDCLKDLDVSIKRRAMELSFALVNGNNIRGMMKELLYFLDSCEPEFKADCASGIFLAAEKYAPSKRWHIDTIMRVLTTAGSYVRDDAVPNLIQLITNSVEMHAYTVQRLYKAILGDYSQQPLVQVAAWCIGEYGDLLVSGQCEEEGPIQVTEDEVLDILESVLISNMSTSVTRGYALTAIMKLSTRFTCTVNRIKKVVSIYGSSIDVELQQRAVEYNALFKKYDHMRSALLERMPVMEKVTTNGPTEIVQTNGETEPAPLETKPPPSGPQPTSQANDLLDLLGGNDITPVIPTAPTSKPSSAGGELLDLLGDINLTGAPAAAPAPASVPQISQPPFLLDGLSSQPLFNDIAAGIPSITAYSKNGLKIEFTFERSNTNPSVTVITIQASNSTELDMTDFVFQAAVPKTFQLQLLSPSSSIVPAFNTGTITQVIKVLNPQKQQLRMRIKLTYNHKGSAMQDLAEVNNFPPQSWQ</sequence>
<accession>Q5R5M2</accession>
<keyword id="KW-0168">Coated pit</keyword>
<keyword id="KW-0963">Cytoplasm</keyword>
<keyword id="KW-0968">Cytoplasmic vesicle</keyword>
<keyword id="KW-0333">Golgi apparatus</keyword>
<keyword id="KW-0472">Membrane</keyword>
<keyword id="KW-0653">Protein transport</keyword>
<keyword id="KW-1185">Reference proteome</keyword>
<keyword id="KW-0813">Transport</keyword>
<reference key="1">
    <citation type="submission" date="2004-11" db="EMBL/GenBank/DDBJ databases">
        <authorList>
            <consortium name="The German cDNA consortium"/>
        </authorList>
    </citation>
    <scope>NUCLEOTIDE SEQUENCE [LARGE SCALE MRNA]</scope>
    <source>
        <tissue>Kidney</tissue>
    </source>
</reference>
<name>AP1G1_PONAB</name>
<gene>
    <name type="primary">AP1G1</name>
</gene>
<feature type="chain" id="PRO_0000328678" description="AP-1 complex subunit gamma-1">
    <location>
        <begin position="1"/>
        <end position="822"/>
    </location>
</feature>
<feature type="domain" description="GAE" evidence="3">
    <location>
        <begin position="702"/>
        <end position="817"/>
    </location>
</feature>
<feature type="region of interest" description="Disordered" evidence="4">
    <location>
        <begin position="597"/>
        <end position="628"/>
    </location>
</feature>